<gene>
    <name type="primary">IL25</name>
    <name type="synonym">IL17E</name>
    <name type="ORF">UNQ3120/PRO10272</name>
</gene>
<proteinExistence type="evidence at protein level"/>
<reference key="1">
    <citation type="journal article" date="2001" name="J. Biol. Chem.">
        <title>IL-17E, a novel proinflammatory ligand for the IL-17 receptor homolog IL-17Rh1.</title>
        <authorList>
            <person name="Lee J."/>
            <person name="Ho W.-H."/>
            <person name="Maruoka M."/>
            <person name="Corpuz R.T."/>
            <person name="Baldwin D.T."/>
            <person name="Foster J.S."/>
            <person name="Goddard A.D."/>
            <person name="Yansura D.G."/>
            <person name="Vandlen R.L."/>
            <person name="Wood W.I."/>
            <person name="Gurney A.L."/>
        </authorList>
    </citation>
    <scope>NUCLEOTIDE SEQUENCE [MRNA] (ISOFORM 1)</scope>
</reference>
<reference key="2">
    <citation type="journal article" date="2001" name="Immunity">
        <title>IL-25 induces IL-4, IL-5, and IL-13 and Th2-associated pathologies in vivo.</title>
        <authorList>
            <person name="Fort M.M."/>
            <person name="Cheung J."/>
            <person name="Yen D."/>
            <person name="Li J."/>
            <person name="Zurawski S.M."/>
            <person name="Lo S."/>
            <person name="Menon S."/>
            <person name="Clifford T."/>
            <person name="Hunte B."/>
            <person name="Lesley R."/>
            <person name="Muchamuel T."/>
            <person name="Hurst S.D."/>
            <person name="Zurawski G."/>
            <person name="Leach M.W."/>
            <person name="Gorman D.M."/>
            <person name="Rennick D.M."/>
        </authorList>
    </citation>
    <scope>NUCLEOTIDE SEQUENCE [MRNA] (ISOFORM 2)</scope>
    <scope>FUNCTION</scope>
</reference>
<reference key="3">
    <citation type="journal article" date="2002" name="Blood">
        <title>Transgenic overexpression of human IL-17E results in eosinophilia, B-lymphocyte hyperplasia, and altered antibody production.</title>
        <authorList>
            <person name="Kim M.R."/>
            <person name="Manoukian R."/>
            <person name="Yeh R."/>
            <person name="Silbiger S.M."/>
            <person name="Danilenko D.M."/>
            <person name="Scully S."/>
            <person name="Sun J."/>
            <person name="DeRose M.L."/>
            <person name="Stolina M."/>
            <person name="Chang D."/>
            <person name="Van G.Y."/>
            <person name="Clarkin K."/>
            <person name="Nguyen H.Q."/>
            <person name="Yu Y.B."/>
            <person name="Jing S."/>
            <person name="Senaldi G."/>
            <person name="Elliott G."/>
            <person name="Medlock E.S."/>
        </authorList>
    </citation>
    <scope>NUCLEOTIDE SEQUENCE [MRNA] (ISOFORM 2)</scope>
    <source>
        <tissue>Testis</tissue>
    </source>
</reference>
<reference key="4">
    <citation type="journal article" date="2003" name="Genome Res.">
        <title>The secreted protein discovery initiative (SPDI), a large-scale effort to identify novel human secreted and transmembrane proteins: a bioinformatics assessment.</title>
        <authorList>
            <person name="Clark H.F."/>
            <person name="Gurney A.L."/>
            <person name="Abaya E."/>
            <person name="Baker K."/>
            <person name="Baldwin D.T."/>
            <person name="Brush J."/>
            <person name="Chen J."/>
            <person name="Chow B."/>
            <person name="Chui C."/>
            <person name="Crowley C."/>
            <person name="Currell B."/>
            <person name="Deuel B."/>
            <person name="Dowd P."/>
            <person name="Eaton D."/>
            <person name="Foster J.S."/>
            <person name="Grimaldi C."/>
            <person name="Gu Q."/>
            <person name="Hass P.E."/>
            <person name="Heldens S."/>
            <person name="Huang A."/>
            <person name="Kim H.S."/>
            <person name="Klimowski L."/>
            <person name="Jin Y."/>
            <person name="Johnson S."/>
            <person name="Lee J."/>
            <person name="Lewis L."/>
            <person name="Liao D."/>
            <person name="Mark M.R."/>
            <person name="Robbie E."/>
            <person name="Sanchez C."/>
            <person name="Schoenfeld J."/>
            <person name="Seshagiri S."/>
            <person name="Simmons L."/>
            <person name="Singh J."/>
            <person name="Smith V."/>
            <person name="Stinson J."/>
            <person name="Vagts A."/>
            <person name="Vandlen R.L."/>
            <person name="Watanabe C."/>
            <person name="Wieand D."/>
            <person name="Woods K."/>
            <person name="Xie M.-H."/>
            <person name="Yansura D.G."/>
            <person name="Yi S."/>
            <person name="Yu G."/>
            <person name="Yuan J."/>
            <person name="Zhang M."/>
            <person name="Zhang Z."/>
            <person name="Goddard A.D."/>
            <person name="Wood W.I."/>
            <person name="Godowski P.J."/>
            <person name="Gray A.M."/>
        </authorList>
    </citation>
    <scope>NUCLEOTIDE SEQUENCE [LARGE SCALE MRNA] (ISOFORM 1)</scope>
</reference>
<reference key="5">
    <citation type="submission" date="2005-09" db="EMBL/GenBank/DDBJ databases">
        <authorList>
            <person name="Mural R.J."/>
            <person name="Istrail S."/>
            <person name="Sutton G.G."/>
            <person name="Florea L."/>
            <person name="Halpern A.L."/>
            <person name="Mobarry C.M."/>
            <person name="Lippert R."/>
            <person name="Walenz B."/>
            <person name="Shatkay H."/>
            <person name="Dew I."/>
            <person name="Miller J.R."/>
            <person name="Flanigan M.J."/>
            <person name="Edwards N.J."/>
            <person name="Bolanos R."/>
            <person name="Fasulo D."/>
            <person name="Halldorsson B.V."/>
            <person name="Hannenhalli S."/>
            <person name="Turner R."/>
            <person name="Yooseph S."/>
            <person name="Lu F."/>
            <person name="Nusskern D.R."/>
            <person name="Shue B.C."/>
            <person name="Zheng X.H."/>
            <person name="Zhong F."/>
            <person name="Delcher A.L."/>
            <person name="Huson D.H."/>
            <person name="Kravitz S.A."/>
            <person name="Mouchard L."/>
            <person name="Reinert K."/>
            <person name="Remington K.A."/>
            <person name="Clark A.G."/>
            <person name="Waterman M.S."/>
            <person name="Eichler E.E."/>
            <person name="Adams M.D."/>
            <person name="Hunkapiller M.W."/>
            <person name="Myers E.W."/>
            <person name="Venter J.C."/>
        </authorList>
    </citation>
    <scope>NUCLEOTIDE SEQUENCE [LARGE SCALE GENOMIC DNA]</scope>
</reference>
<reference key="6">
    <citation type="journal article" date="2004" name="Genome Res.">
        <title>The status, quality, and expansion of the NIH full-length cDNA project: the Mammalian Gene Collection (MGC).</title>
        <authorList>
            <consortium name="The MGC Project Team"/>
        </authorList>
    </citation>
    <scope>NUCLEOTIDE SEQUENCE [LARGE SCALE MRNA] (ISOFORMS 1 AND 2)</scope>
</reference>
<reference key="7">
    <citation type="journal article" date="2004" name="Protein Sci.">
        <title>Signal peptide prediction based on analysis of experimentally verified cleavage sites.</title>
        <authorList>
            <person name="Zhang Z."/>
            <person name="Henzel W.J."/>
        </authorList>
    </citation>
    <scope>PROTEIN SEQUENCE OF 33-47</scope>
</reference>
<reference key="8">
    <citation type="journal article" date="2005" name="Am. J. Respir. Cell Mol. Biol.">
        <title>Interleukin-25-induced chemokines and interleukin-6 release from eosinophils is mediated by p38 mitogen-activated protein kinase, c-Jun N-terminal kinase, and nuclear factor-kappaB.</title>
        <authorList>
            <person name="Wong C.K."/>
            <person name="Cheung P.F."/>
            <person name="Ip W.K."/>
            <person name="Lam C.W."/>
        </authorList>
    </citation>
    <scope>FUNCTION</scope>
</reference>
<reference key="9">
    <citation type="journal article" date="2015" name="J. Immunol.">
        <title>A novel IL-25 signaling pathway through STAT5.</title>
        <authorList>
            <person name="Wu L."/>
            <person name="Zepp J.A."/>
            <person name="Qian W."/>
            <person name="Martin B.N."/>
            <person name="Ouyang W."/>
            <person name="Yin W."/>
            <person name="Bunting K.D."/>
            <person name="Aronica M."/>
            <person name="Erzurum S."/>
            <person name="Li X."/>
        </authorList>
    </citation>
    <scope>FUNCTION</scope>
</reference>
<dbReference type="EMBL" id="AF305200">
    <property type="protein sequence ID" value="AAG40848.1"/>
    <property type="molecule type" value="mRNA"/>
</dbReference>
<dbReference type="EMBL" id="AF458059">
    <property type="protein sequence ID" value="AAL57622.1"/>
    <property type="molecule type" value="mRNA"/>
</dbReference>
<dbReference type="EMBL" id="AF461739">
    <property type="protein sequence ID" value="AAN39038.1"/>
    <property type="molecule type" value="mRNA"/>
</dbReference>
<dbReference type="EMBL" id="AY359127">
    <property type="protein sequence ID" value="AAQ89484.1"/>
    <property type="molecule type" value="mRNA"/>
</dbReference>
<dbReference type="EMBL" id="CH471078">
    <property type="protein sequence ID" value="EAW66162.1"/>
    <property type="molecule type" value="Genomic_DNA"/>
</dbReference>
<dbReference type="EMBL" id="BC069565">
    <property type="protein sequence ID" value="AAH69565.1"/>
    <property type="molecule type" value="mRNA"/>
</dbReference>
<dbReference type="EMBL" id="BC104929">
    <property type="protein sequence ID" value="AAI04930.1"/>
    <property type="molecule type" value="mRNA"/>
</dbReference>
<dbReference type="EMBL" id="BC104931">
    <property type="protein sequence ID" value="AAI04932.1"/>
    <property type="molecule type" value="mRNA"/>
</dbReference>
<dbReference type="CCDS" id="CCDS45086.1">
    <molecule id="Q9H293-2"/>
</dbReference>
<dbReference type="CCDS" id="CCDS9597.1">
    <molecule id="Q9H293-1"/>
</dbReference>
<dbReference type="RefSeq" id="NP_073626.1">
    <molecule id="Q9H293-1"/>
    <property type="nucleotide sequence ID" value="NM_022789.4"/>
</dbReference>
<dbReference type="RefSeq" id="NP_758525.1">
    <molecule id="Q9H293-2"/>
    <property type="nucleotide sequence ID" value="NM_172314.2"/>
</dbReference>
<dbReference type="PDB" id="7UWJ">
    <property type="method" value="EM"/>
    <property type="resolution" value="3.20 A"/>
    <property type="chains" value="A/B=30-177"/>
</dbReference>
<dbReference type="PDB" id="7UWK">
    <property type="method" value="EM"/>
    <property type="resolution" value="4.40 A"/>
    <property type="chains" value="A/B/E/F/G/H=30-177"/>
</dbReference>
<dbReference type="PDB" id="7UWL">
    <property type="method" value="EM"/>
    <property type="resolution" value="3.70 A"/>
    <property type="chains" value="A/B=30-177"/>
</dbReference>
<dbReference type="PDBsum" id="7UWJ"/>
<dbReference type="PDBsum" id="7UWK"/>
<dbReference type="PDBsum" id="7UWL"/>
<dbReference type="EMDB" id="EMD-26833"/>
<dbReference type="EMDB" id="EMD-26834"/>
<dbReference type="EMDB" id="EMD-26835"/>
<dbReference type="SMR" id="Q9H293"/>
<dbReference type="BioGRID" id="122310">
    <property type="interactions" value="51"/>
</dbReference>
<dbReference type="ComplexPortal" id="CPX-9204">
    <property type="entry name" value="Interleukin-25 receptor-ligand complex"/>
</dbReference>
<dbReference type="ComplexPortal" id="CPX-9306">
    <property type="entry name" value="Interleukin-25 complex"/>
</dbReference>
<dbReference type="CORUM" id="Q9H293"/>
<dbReference type="FunCoup" id="Q9H293">
    <property type="interactions" value="399"/>
</dbReference>
<dbReference type="IntAct" id="Q9H293">
    <property type="interactions" value="38"/>
</dbReference>
<dbReference type="STRING" id="9606.ENSP00000328111"/>
<dbReference type="GlyCosmos" id="Q9H293">
    <property type="glycosylation" value="1 site, No reported glycans"/>
</dbReference>
<dbReference type="GlyGen" id="Q9H293">
    <property type="glycosylation" value="2 sites, 1 O-linked glycan (1 site)"/>
</dbReference>
<dbReference type="iPTMnet" id="Q9H293"/>
<dbReference type="PhosphoSitePlus" id="Q9H293"/>
<dbReference type="BioMuta" id="IL25"/>
<dbReference type="DMDM" id="20138730"/>
<dbReference type="MassIVE" id="Q9H293"/>
<dbReference type="PaxDb" id="9606-ENSP00000328111"/>
<dbReference type="PeptideAtlas" id="Q9H293"/>
<dbReference type="ProteomicsDB" id="80511">
    <molecule id="Q9H293-1"/>
</dbReference>
<dbReference type="ProteomicsDB" id="80512">
    <molecule id="Q9H293-2"/>
</dbReference>
<dbReference type="TopDownProteomics" id="Q9H293-2">
    <molecule id="Q9H293-2"/>
</dbReference>
<dbReference type="ABCD" id="Q9H293">
    <property type="antibodies" value="28 sequenced antibodies"/>
</dbReference>
<dbReference type="Antibodypedia" id="22458">
    <property type="antibodies" value="728 antibodies from 38 providers"/>
</dbReference>
<dbReference type="DNASU" id="64806"/>
<dbReference type="Ensembl" id="ENST00000329715.2">
    <molecule id="Q9H293-1"/>
    <property type="protein sequence ID" value="ENSP00000328111.2"/>
    <property type="gene ID" value="ENSG00000166090.8"/>
</dbReference>
<dbReference type="Ensembl" id="ENST00000397242.3">
    <molecule id="Q9H293-2"/>
    <property type="protein sequence ID" value="ENSP00000380417.2"/>
    <property type="gene ID" value="ENSG00000166090.8"/>
</dbReference>
<dbReference type="GeneID" id="64806"/>
<dbReference type="KEGG" id="hsa:64806"/>
<dbReference type="MANE-Select" id="ENST00000397242.3">
    <molecule id="Q9H293-2"/>
    <property type="protein sequence ID" value="ENSP00000380417.2"/>
    <property type="RefSeq nucleotide sequence ID" value="NM_172314.2"/>
    <property type="RefSeq protein sequence ID" value="NP_758525.1"/>
</dbReference>
<dbReference type="UCSC" id="uc001wjq.4">
    <molecule id="Q9H293-1"/>
    <property type="organism name" value="human"/>
</dbReference>
<dbReference type="AGR" id="HGNC:13765"/>
<dbReference type="CTD" id="64806"/>
<dbReference type="DisGeNET" id="64806"/>
<dbReference type="GeneCards" id="IL25"/>
<dbReference type="HGNC" id="HGNC:13765">
    <property type="gene designation" value="IL25"/>
</dbReference>
<dbReference type="HPA" id="ENSG00000166090">
    <property type="expression patterns" value="Not detected"/>
</dbReference>
<dbReference type="MIM" id="605658">
    <property type="type" value="gene"/>
</dbReference>
<dbReference type="neXtProt" id="NX_Q9H293"/>
<dbReference type="OpenTargets" id="ENSG00000166090"/>
<dbReference type="PharmGKB" id="PA29799"/>
<dbReference type="VEuPathDB" id="HostDB:ENSG00000166090"/>
<dbReference type="eggNOG" id="ENOG502S755">
    <property type="taxonomic scope" value="Eukaryota"/>
</dbReference>
<dbReference type="GeneTree" id="ENSGT00930000151068"/>
<dbReference type="HOGENOM" id="CLU_139236_0_0_1"/>
<dbReference type="InParanoid" id="Q9H293"/>
<dbReference type="OMA" id="TEEWLKW"/>
<dbReference type="OrthoDB" id="6038945at2759"/>
<dbReference type="PAN-GO" id="Q9H293">
    <property type="GO annotations" value="0 GO annotations based on evolutionary models"/>
</dbReference>
<dbReference type="PhylomeDB" id="Q9H293"/>
<dbReference type="TreeFam" id="TF314701"/>
<dbReference type="PathwayCommons" id="Q9H293"/>
<dbReference type="Reactome" id="R-HSA-448424">
    <property type="pathway name" value="Interleukin-17 signaling"/>
</dbReference>
<dbReference type="SignaLink" id="Q9H293"/>
<dbReference type="BioGRID-ORCS" id="64806">
    <property type="hits" value="12 hits in 1145 CRISPR screens"/>
</dbReference>
<dbReference type="GeneWiki" id="Interleukin_25"/>
<dbReference type="GenomeRNAi" id="64806"/>
<dbReference type="Pharos" id="Q9H293">
    <property type="development level" value="Tbio"/>
</dbReference>
<dbReference type="PRO" id="PR:Q9H293"/>
<dbReference type="Proteomes" id="UP000005640">
    <property type="component" value="Chromosome 14"/>
</dbReference>
<dbReference type="RNAct" id="Q9H293">
    <property type="molecule type" value="protein"/>
</dbReference>
<dbReference type="Bgee" id="ENSG00000166090">
    <property type="expression patterns" value="Expressed in male germ line stem cell (sensu Vertebrata) in testis and 38 other cell types or tissues"/>
</dbReference>
<dbReference type="GO" id="GO:0005576">
    <property type="term" value="C:extracellular region"/>
    <property type="evidence" value="ECO:0000304"/>
    <property type="project" value="Reactome"/>
</dbReference>
<dbReference type="GO" id="GO:0005615">
    <property type="term" value="C:extracellular space"/>
    <property type="evidence" value="ECO:0007669"/>
    <property type="project" value="UniProtKB-KW"/>
</dbReference>
<dbReference type="GO" id="GO:0005125">
    <property type="term" value="F:cytokine activity"/>
    <property type="evidence" value="ECO:0007669"/>
    <property type="project" value="UniProtKB-KW"/>
</dbReference>
<dbReference type="GO" id="GO:0030380">
    <property type="term" value="F:interleukin-17E receptor binding"/>
    <property type="evidence" value="ECO:0000304"/>
    <property type="project" value="UniProtKB"/>
</dbReference>
<dbReference type="GO" id="GO:0030222">
    <property type="term" value="P:eosinophil differentiation"/>
    <property type="evidence" value="ECO:0007669"/>
    <property type="project" value="Ensembl"/>
</dbReference>
<dbReference type="GO" id="GO:0002437">
    <property type="term" value="P:inflammatory response to antigenic stimulus"/>
    <property type="evidence" value="ECO:0007669"/>
    <property type="project" value="Ensembl"/>
</dbReference>
<dbReference type="GO" id="GO:0045944">
    <property type="term" value="P:positive regulation of transcription by RNA polymerase II"/>
    <property type="evidence" value="ECO:0007669"/>
    <property type="project" value="Ensembl"/>
</dbReference>
<dbReference type="GO" id="GO:0009620">
    <property type="term" value="P:response to fungus"/>
    <property type="evidence" value="ECO:0007669"/>
    <property type="project" value="Ensembl"/>
</dbReference>
<dbReference type="GO" id="GO:0009624">
    <property type="term" value="P:response to nematode"/>
    <property type="evidence" value="ECO:0007669"/>
    <property type="project" value="Ensembl"/>
</dbReference>
<dbReference type="FunFam" id="2.10.90.10:FF:000057">
    <property type="entry name" value="Interleukin 17E"/>
    <property type="match status" value="1"/>
</dbReference>
<dbReference type="Gene3D" id="2.10.90.10">
    <property type="entry name" value="Cystine-knot cytokines"/>
    <property type="match status" value="1"/>
</dbReference>
<dbReference type="InterPro" id="IPR029034">
    <property type="entry name" value="Cystine-knot_cytokine"/>
</dbReference>
<dbReference type="InterPro" id="IPR010345">
    <property type="entry name" value="IL-17_fam"/>
</dbReference>
<dbReference type="Pfam" id="PF06083">
    <property type="entry name" value="IL17"/>
    <property type="match status" value="1"/>
</dbReference>
<dbReference type="SUPFAM" id="SSF57501">
    <property type="entry name" value="Cystine-knot cytokines"/>
    <property type="match status" value="1"/>
</dbReference>
<comment type="function">
    <text evidence="2 5 7 8">Cytokine produced by various cells such as eosinophils, T-helper type 2 (Th2) cells or epithelial cells that plays a role in internal safety of adaptive immune responses by regulating cytokine production (PubMed:15860795, PubMed:25821217). Promotes and augments T-helper type 2 responses locally or systemically (PubMed:25821217). Exerts its activity via its receptor composed of IL17RA and IL17RB for signal transduction (By similarity). In turn, stimulates the JAK2-STAT5A pathway and promotes the secretion of type-2 associated cytokines including IL4, IL9 and IL13 (PubMed:25821217). Also induces the release of IL8, and IL6 from eosinophils through the combined activation of MAPK and NF-kappa-B pathways (PubMed:15860795). Inhibits the differentiation of T-helper (Th17) cells via the production of IL4, IL5 and IL13 (PubMed:11754819).</text>
</comment>
<comment type="subcellular location">
    <subcellularLocation>
        <location>Secreted</location>
    </subcellularLocation>
</comment>
<comment type="alternative products">
    <event type="alternative splicing"/>
    <isoform>
        <id>Q9H293-1</id>
        <name>1</name>
        <sequence type="displayed"/>
    </isoform>
    <isoform>
        <id>Q9H293-2</id>
        <name>2</name>
        <sequence type="described" ref="VSP_010159"/>
    </isoform>
</comment>
<comment type="tissue specificity">
    <text>Expressed at low levels in several tissues, including brain, kidney, lung, prostate, testis, spinal cord, adrenal gland, and trachea.</text>
</comment>
<comment type="similarity">
    <text evidence="12">Belongs to the IL-17 family.</text>
</comment>
<comment type="online information" name="Wikipedia">
    <link uri="https://en.wikipedia.org/wiki/Interleukin_17"/>
    <text>Interleukin-17 entry</text>
</comment>
<evidence type="ECO:0000250" key="1"/>
<evidence type="ECO:0000250" key="2">
    <source>
        <dbReference type="UniProtKB" id="Q8VHH8"/>
    </source>
</evidence>
<evidence type="ECO:0000255" key="3"/>
<evidence type="ECO:0000256" key="4">
    <source>
        <dbReference type="SAM" id="MobiDB-lite"/>
    </source>
</evidence>
<evidence type="ECO:0000269" key="5">
    <source>
    </source>
</evidence>
<evidence type="ECO:0000269" key="6">
    <source>
    </source>
</evidence>
<evidence type="ECO:0000269" key="7">
    <source>
    </source>
</evidence>
<evidence type="ECO:0000269" key="8">
    <source>
    </source>
</evidence>
<evidence type="ECO:0000303" key="9">
    <source>
    </source>
</evidence>
<evidence type="ECO:0000303" key="10">
    <source>
    </source>
</evidence>
<evidence type="ECO:0000303" key="11">
    <source>
    </source>
</evidence>
<evidence type="ECO:0000305" key="12"/>
<evidence type="ECO:0007829" key="13">
    <source>
        <dbReference type="PDB" id="7UWJ"/>
    </source>
</evidence>
<feature type="signal peptide" evidence="6">
    <location>
        <begin position="1"/>
        <end position="32"/>
    </location>
</feature>
<feature type="chain" id="PRO_0000015431" description="Interleukin-25">
    <location>
        <begin position="33"/>
        <end position="177"/>
    </location>
</feature>
<feature type="region of interest" description="Disordered" evidence="4">
    <location>
        <begin position="58"/>
        <end position="81"/>
    </location>
</feature>
<feature type="compositionally biased region" description="Basic and acidic residues" evidence="4">
    <location>
        <begin position="69"/>
        <end position="78"/>
    </location>
</feature>
<feature type="glycosylation site" description="N-linked (GlcNAc...) asparagine" evidence="3">
    <location>
        <position position="136"/>
    </location>
</feature>
<feature type="disulfide bond" evidence="1">
    <location>
        <begin position="110"/>
        <end position="168"/>
    </location>
</feature>
<feature type="disulfide bond" evidence="1">
    <location>
        <begin position="115"/>
        <end position="170"/>
    </location>
</feature>
<feature type="splice variant" id="VSP_010159" description="In isoform 2." evidence="9 10 11">
    <original>MRERPRLGEDSSLISLFL</original>
    <variation>MY</variation>
    <location>
        <begin position="1"/>
        <end position="18"/>
    </location>
</feature>
<feature type="sequence conflict" description="In Ref. 2; AAL57622." evidence="12" ref="2">
    <original>G</original>
    <variation>A</variation>
    <location>
        <position position="177"/>
    </location>
</feature>
<feature type="strand" evidence="13">
    <location>
        <begin position="82"/>
        <end position="88"/>
    </location>
</feature>
<feature type="strand" evidence="13">
    <location>
        <begin position="90"/>
        <end position="96"/>
    </location>
</feature>
<feature type="strand" evidence="13">
    <location>
        <begin position="100"/>
        <end position="110"/>
    </location>
</feature>
<feature type="turn" evidence="13">
    <location>
        <begin position="118"/>
        <end position="120"/>
    </location>
</feature>
<feature type="strand" evidence="13">
    <location>
        <begin position="121"/>
        <end position="124"/>
    </location>
</feature>
<feature type="strand" evidence="13">
    <location>
        <begin position="129"/>
        <end position="141"/>
    </location>
</feature>
<feature type="strand" evidence="13">
    <location>
        <begin position="158"/>
        <end position="171"/>
    </location>
</feature>
<keyword id="KW-0002">3D-structure</keyword>
<keyword id="KW-0025">Alternative splicing</keyword>
<keyword id="KW-0202">Cytokine</keyword>
<keyword id="KW-0903">Direct protein sequencing</keyword>
<keyword id="KW-1015">Disulfide bond</keyword>
<keyword id="KW-0325">Glycoprotein</keyword>
<keyword id="KW-1267">Proteomics identification</keyword>
<keyword id="KW-1185">Reference proteome</keyword>
<keyword id="KW-0964">Secreted</keyword>
<keyword id="KW-0732">Signal</keyword>
<organism>
    <name type="scientific">Homo sapiens</name>
    <name type="common">Human</name>
    <dbReference type="NCBI Taxonomy" id="9606"/>
    <lineage>
        <taxon>Eukaryota</taxon>
        <taxon>Metazoa</taxon>
        <taxon>Chordata</taxon>
        <taxon>Craniata</taxon>
        <taxon>Vertebrata</taxon>
        <taxon>Euteleostomi</taxon>
        <taxon>Mammalia</taxon>
        <taxon>Eutheria</taxon>
        <taxon>Euarchontoglires</taxon>
        <taxon>Primates</taxon>
        <taxon>Haplorrhini</taxon>
        <taxon>Catarrhini</taxon>
        <taxon>Hominidae</taxon>
        <taxon>Homo</taxon>
    </lineage>
</organism>
<sequence>MRERPRLGEDSSLISLFLQVVAFLAMVMGTHTYSHWPSCCPSKGQDTSEELLRWSTVPVPPLEPARPNRHPESCRASEDGPLNSRAISPWRYELDRDLNRLPQDLYHARCLCPHCVSLQTGSHMDPRGNSELLYHNQTVFYRRPCHGEKGTHKGYCLERRLYRVSLACVCVRPRVMG</sequence>
<name>IL25_HUMAN</name>
<protein>
    <recommendedName>
        <fullName>Interleukin-25</fullName>
        <shortName>IL-25</shortName>
    </recommendedName>
    <alternativeName>
        <fullName>Interleukin-17E</fullName>
        <shortName>IL-17E</shortName>
    </alternativeName>
</protein>
<accession>Q9H293</accession>
<accession>Q2M3F0</accession>
<accession>Q8IZV3</accession>
<accession>Q8WXB0</accession>